<proteinExistence type="inferred from homology"/>
<sequence>MAVITKIEVQKRSKERFNIYIDKGQGEEYGFSVNEVILIKHGLQKGLEIDEIALGNILYNEEVQKAYLQAISYLSYQMRTKLEIEDFLRKKEVGQAIISEVVSKLLHDRYINDKEYAILYTRTQSNVNRKGPTVIKRELLNKGVQDLIITHSLQEYPKEKQIENALILIEKKKKSYQKHSFLQMKLKLDEMLVRKGYSRDVIQICLEELKDEKDDEKQQEALHYHGNKYYEKYKKYDGWTLENKMKQALYRKGFSIDEIEIFLQMKREEG</sequence>
<name>RECX_BACC3</name>
<gene>
    <name evidence="1" type="primary">recX</name>
    <name type="ordered locus">BCA_0535</name>
</gene>
<organism>
    <name type="scientific">Bacillus cereus (strain 03BB102)</name>
    <dbReference type="NCBI Taxonomy" id="572264"/>
    <lineage>
        <taxon>Bacteria</taxon>
        <taxon>Bacillati</taxon>
        <taxon>Bacillota</taxon>
        <taxon>Bacilli</taxon>
        <taxon>Bacillales</taxon>
        <taxon>Bacillaceae</taxon>
        <taxon>Bacillus</taxon>
        <taxon>Bacillus cereus group</taxon>
    </lineage>
</organism>
<reference key="1">
    <citation type="submission" date="2009-02" db="EMBL/GenBank/DDBJ databases">
        <title>Genome sequence of Bacillus cereus 03BB102.</title>
        <authorList>
            <person name="Dodson R.J."/>
            <person name="Jackson P."/>
            <person name="Munk A.C."/>
            <person name="Brettin T."/>
            <person name="Bruce D."/>
            <person name="Detter C."/>
            <person name="Tapia R."/>
            <person name="Han C."/>
            <person name="Sutton G."/>
            <person name="Sims D."/>
        </authorList>
    </citation>
    <scope>NUCLEOTIDE SEQUENCE [LARGE SCALE GENOMIC DNA]</scope>
    <source>
        <strain>03BB102</strain>
    </source>
</reference>
<dbReference type="EMBL" id="CP001407">
    <property type="protein sequence ID" value="ACO27168.1"/>
    <property type="molecule type" value="Genomic_DNA"/>
</dbReference>
<dbReference type="RefSeq" id="WP_000268521.1">
    <property type="nucleotide sequence ID" value="NC_012472.1"/>
</dbReference>
<dbReference type="SMR" id="C1EWF1"/>
<dbReference type="KEGG" id="bcx:BCA_0535"/>
<dbReference type="PATRIC" id="fig|572264.18.peg.521"/>
<dbReference type="Proteomes" id="UP000002210">
    <property type="component" value="Chromosome"/>
</dbReference>
<dbReference type="GO" id="GO:0005737">
    <property type="term" value="C:cytoplasm"/>
    <property type="evidence" value="ECO:0007669"/>
    <property type="project" value="UniProtKB-SubCell"/>
</dbReference>
<dbReference type="GO" id="GO:0006282">
    <property type="term" value="P:regulation of DNA repair"/>
    <property type="evidence" value="ECO:0007669"/>
    <property type="project" value="UniProtKB-UniRule"/>
</dbReference>
<dbReference type="Gene3D" id="1.10.10.10">
    <property type="entry name" value="Winged helix-like DNA-binding domain superfamily/Winged helix DNA-binding domain"/>
    <property type="match status" value="4"/>
</dbReference>
<dbReference type="HAMAP" id="MF_01114">
    <property type="entry name" value="RecX"/>
    <property type="match status" value="1"/>
</dbReference>
<dbReference type="InterPro" id="IPR053926">
    <property type="entry name" value="RecX_HTH_1st"/>
</dbReference>
<dbReference type="InterPro" id="IPR053924">
    <property type="entry name" value="RecX_HTH_2nd"/>
</dbReference>
<dbReference type="InterPro" id="IPR053925">
    <property type="entry name" value="RecX_HTH_3rd"/>
</dbReference>
<dbReference type="InterPro" id="IPR003783">
    <property type="entry name" value="Regulatory_RecX"/>
</dbReference>
<dbReference type="InterPro" id="IPR036388">
    <property type="entry name" value="WH-like_DNA-bd_sf"/>
</dbReference>
<dbReference type="NCBIfam" id="NF010733">
    <property type="entry name" value="PRK14135.1"/>
    <property type="match status" value="1"/>
</dbReference>
<dbReference type="PANTHER" id="PTHR33602">
    <property type="entry name" value="REGULATORY PROTEIN RECX FAMILY PROTEIN"/>
    <property type="match status" value="1"/>
</dbReference>
<dbReference type="PANTHER" id="PTHR33602:SF1">
    <property type="entry name" value="REGULATORY PROTEIN RECX FAMILY PROTEIN"/>
    <property type="match status" value="1"/>
</dbReference>
<dbReference type="Pfam" id="PF21982">
    <property type="entry name" value="RecX_HTH1"/>
    <property type="match status" value="1"/>
</dbReference>
<dbReference type="Pfam" id="PF02631">
    <property type="entry name" value="RecX_HTH2"/>
    <property type="match status" value="1"/>
</dbReference>
<dbReference type="Pfam" id="PF21981">
    <property type="entry name" value="RecX_HTH3"/>
    <property type="match status" value="2"/>
</dbReference>
<keyword id="KW-0963">Cytoplasm</keyword>
<evidence type="ECO:0000255" key="1">
    <source>
        <dbReference type="HAMAP-Rule" id="MF_01114"/>
    </source>
</evidence>
<protein>
    <recommendedName>
        <fullName evidence="1">Regulatory protein RecX</fullName>
    </recommendedName>
</protein>
<accession>C1EWF1</accession>
<comment type="function">
    <text evidence="1">Modulates RecA activity.</text>
</comment>
<comment type="subcellular location">
    <subcellularLocation>
        <location evidence="1">Cytoplasm</location>
    </subcellularLocation>
</comment>
<comment type="similarity">
    <text evidence="1">Belongs to the RecX family.</text>
</comment>
<feature type="chain" id="PRO_1000164012" description="Regulatory protein RecX">
    <location>
        <begin position="1"/>
        <end position="270"/>
    </location>
</feature>